<name>YAHM_ECOLI</name>
<feature type="chain" id="PRO_0000168580" description="Uncharacterized protein YahM">
    <location>
        <begin position="1"/>
        <end position="81"/>
    </location>
</feature>
<keyword id="KW-1185">Reference proteome</keyword>
<protein>
    <recommendedName>
        <fullName>Uncharacterized protein YahM</fullName>
    </recommendedName>
</protein>
<sequence>MAVQLFKTLLNQIPLLSSLQSGTLPLFGYSGWGRPMKKAHTGESGLKWEAKDSSKLIGNKDHALRGLSSPMAVIRQIRLIT</sequence>
<organism>
    <name type="scientific">Escherichia coli (strain K12)</name>
    <dbReference type="NCBI Taxonomy" id="83333"/>
    <lineage>
        <taxon>Bacteria</taxon>
        <taxon>Pseudomonadati</taxon>
        <taxon>Pseudomonadota</taxon>
        <taxon>Gammaproteobacteria</taxon>
        <taxon>Enterobacterales</taxon>
        <taxon>Enterobacteriaceae</taxon>
        <taxon>Escherichia</taxon>
    </lineage>
</organism>
<proteinExistence type="predicted"/>
<gene>
    <name type="primary">yahM</name>
    <name type="ordered locus">b0327</name>
    <name type="ordered locus">JW5044</name>
</gene>
<accession>P75692</accession>
<accession>Q2MC96</accession>
<dbReference type="EMBL" id="U00096">
    <property type="protein sequence ID" value="AAC73430.2"/>
    <property type="molecule type" value="Genomic_DNA"/>
</dbReference>
<dbReference type="EMBL" id="AP009048">
    <property type="protein sequence ID" value="BAE76110.1"/>
    <property type="molecule type" value="Genomic_DNA"/>
</dbReference>
<dbReference type="PIR" id="G64759">
    <property type="entry name" value="G64759"/>
</dbReference>
<dbReference type="RefSeq" id="NP_414861.2">
    <property type="nucleotide sequence ID" value="NC_000913.3"/>
</dbReference>
<dbReference type="RefSeq" id="WP_000290616.1">
    <property type="nucleotide sequence ID" value="NZ_SSZK01000063.1"/>
</dbReference>
<dbReference type="BioGRID" id="4259804">
    <property type="interactions" value="3"/>
</dbReference>
<dbReference type="FunCoup" id="P75692">
    <property type="interactions" value="38"/>
</dbReference>
<dbReference type="STRING" id="511145.b0327"/>
<dbReference type="PaxDb" id="511145-b0327"/>
<dbReference type="EnsemblBacteria" id="AAC73430">
    <property type="protein sequence ID" value="AAC73430"/>
    <property type="gene ID" value="b0327"/>
</dbReference>
<dbReference type="GeneID" id="944969"/>
<dbReference type="KEGG" id="ecj:JW5044"/>
<dbReference type="KEGG" id="eco:b0327"/>
<dbReference type="KEGG" id="ecoc:C3026_01605"/>
<dbReference type="KEGG" id="ecoc:C3026_24775"/>
<dbReference type="EchoBASE" id="EB3366"/>
<dbReference type="HOGENOM" id="CLU_198605_0_0_6"/>
<dbReference type="InParanoid" id="P75692"/>
<dbReference type="OMA" id="YHRRWSG"/>
<dbReference type="BioCyc" id="EcoCyc:G6192-MONOMER"/>
<dbReference type="PRO" id="PR:P75692"/>
<dbReference type="Proteomes" id="UP000000625">
    <property type="component" value="Chromosome"/>
</dbReference>
<reference key="1">
    <citation type="journal article" date="1997" name="Science">
        <title>The complete genome sequence of Escherichia coli K-12.</title>
        <authorList>
            <person name="Blattner F.R."/>
            <person name="Plunkett G. III"/>
            <person name="Bloch C.A."/>
            <person name="Perna N.T."/>
            <person name="Burland V."/>
            <person name="Riley M."/>
            <person name="Collado-Vides J."/>
            <person name="Glasner J.D."/>
            <person name="Rode C.K."/>
            <person name="Mayhew G.F."/>
            <person name="Gregor J."/>
            <person name="Davis N.W."/>
            <person name="Kirkpatrick H.A."/>
            <person name="Goeden M.A."/>
            <person name="Rose D.J."/>
            <person name="Mau B."/>
            <person name="Shao Y."/>
        </authorList>
    </citation>
    <scope>NUCLEOTIDE SEQUENCE [LARGE SCALE GENOMIC DNA]</scope>
    <source>
        <strain>K12 / MG1655 / ATCC 47076</strain>
    </source>
</reference>
<reference key="2">
    <citation type="journal article" date="2006" name="Mol. Syst. Biol.">
        <title>Highly accurate genome sequences of Escherichia coli K-12 strains MG1655 and W3110.</title>
        <authorList>
            <person name="Hayashi K."/>
            <person name="Morooka N."/>
            <person name="Yamamoto Y."/>
            <person name="Fujita K."/>
            <person name="Isono K."/>
            <person name="Choi S."/>
            <person name="Ohtsubo E."/>
            <person name="Baba T."/>
            <person name="Wanner B.L."/>
            <person name="Mori H."/>
            <person name="Horiuchi T."/>
        </authorList>
    </citation>
    <scope>NUCLEOTIDE SEQUENCE [LARGE SCALE GENOMIC DNA]</scope>
    <source>
        <strain>K12 / W3110 / ATCC 27325 / DSM 5911</strain>
    </source>
</reference>